<protein>
    <recommendedName>
        <fullName evidence="1">3-methyl-2-oxobutanoate hydroxymethyltransferase</fullName>
        <ecNumber evidence="1">2.1.2.11</ecNumber>
    </recommendedName>
    <alternativeName>
        <fullName evidence="1">Ketopantoate hydroxymethyltransferase</fullName>
        <shortName evidence="1">KPHMT</shortName>
    </alternativeName>
</protein>
<reference key="1">
    <citation type="journal article" date="2009" name="Proc. Natl. Acad. Sci. U.S.A.">
        <title>Biogeography of the Sulfolobus islandicus pan-genome.</title>
        <authorList>
            <person name="Reno M.L."/>
            <person name="Held N.L."/>
            <person name="Fields C.J."/>
            <person name="Burke P.V."/>
            <person name="Whitaker R.J."/>
        </authorList>
    </citation>
    <scope>NUCLEOTIDE SEQUENCE [LARGE SCALE GENOMIC DNA]</scope>
    <source>
        <strain>Y.N.15.51 / Yellowstone #2</strain>
    </source>
</reference>
<keyword id="KW-0173">Coenzyme A biosynthesis</keyword>
<keyword id="KW-0963">Cytoplasm</keyword>
<keyword id="KW-0460">Magnesium</keyword>
<keyword id="KW-0479">Metal-binding</keyword>
<keyword id="KW-0808">Transferase</keyword>
<feature type="chain" id="PRO_1000203481" description="3-methyl-2-oxobutanoate hydroxymethyltransferase">
    <location>
        <begin position="1"/>
        <end position="267"/>
    </location>
</feature>
<feature type="active site" description="Proton acceptor" evidence="1">
    <location>
        <position position="182"/>
    </location>
</feature>
<feature type="binding site" evidence="1">
    <location>
        <begin position="45"/>
        <end position="46"/>
    </location>
    <ligand>
        <name>3-methyl-2-oxobutanoate</name>
        <dbReference type="ChEBI" id="CHEBI:11851"/>
    </ligand>
</feature>
<feature type="binding site" evidence="1">
    <location>
        <position position="45"/>
    </location>
    <ligand>
        <name>Mg(2+)</name>
        <dbReference type="ChEBI" id="CHEBI:18420"/>
    </ligand>
</feature>
<feature type="binding site" evidence="1">
    <location>
        <position position="84"/>
    </location>
    <ligand>
        <name>3-methyl-2-oxobutanoate</name>
        <dbReference type="ChEBI" id="CHEBI:11851"/>
    </ligand>
</feature>
<feature type="binding site" evidence="1">
    <location>
        <position position="84"/>
    </location>
    <ligand>
        <name>Mg(2+)</name>
        <dbReference type="ChEBI" id="CHEBI:18420"/>
    </ligand>
</feature>
<feature type="binding site" evidence="1">
    <location>
        <position position="113"/>
    </location>
    <ligand>
        <name>3-methyl-2-oxobutanoate</name>
        <dbReference type="ChEBI" id="CHEBI:11851"/>
    </ligand>
</feature>
<feature type="binding site" evidence="1">
    <location>
        <position position="115"/>
    </location>
    <ligand>
        <name>Mg(2+)</name>
        <dbReference type="ChEBI" id="CHEBI:18420"/>
    </ligand>
</feature>
<proteinExistence type="inferred from homology"/>
<evidence type="ECO:0000255" key="1">
    <source>
        <dbReference type="HAMAP-Rule" id="MF_00156"/>
    </source>
</evidence>
<dbReference type="EC" id="2.1.2.11" evidence="1"/>
<dbReference type="EMBL" id="CP001404">
    <property type="protein sequence ID" value="ACP49701.1"/>
    <property type="molecule type" value="Genomic_DNA"/>
</dbReference>
<dbReference type="RefSeq" id="WP_012718100.1">
    <property type="nucleotide sequence ID" value="NC_012623.1"/>
</dbReference>
<dbReference type="SMR" id="C3NMB9"/>
<dbReference type="GeneID" id="7810749"/>
<dbReference type="KEGG" id="sin:YN1551_2797"/>
<dbReference type="HOGENOM" id="CLU_036645_1_0_2"/>
<dbReference type="UniPathway" id="UPA00241"/>
<dbReference type="Proteomes" id="UP000006818">
    <property type="component" value="Chromosome"/>
</dbReference>
<dbReference type="GO" id="GO:0005737">
    <property type="term" value="C:cytoplasm"/>
    <property type="evidence" value="ECO:0007669"/>
    <property type="project" value="UniProtKB-SubCell"/>
</dbReference>
<dbReference type="GO" id="GO:0003864">
    <property type="term" value="F:3-methyl-2-oxobutanoate hydroxymethyltransferase activity"/>
    <property type="evidence" value="ECO:0007669"/>
    <property type="project" value="UniProtKB-UniRule"/>
</dbReference>
<dbReference type="GO" id="GO:0000287">
    <property type="term" value="F:magnesium ion binding"/>
    <property type="evidence" value="ECO:0007669"/>
    <property type="project" value="TreeGrafter"/>
</dbReference>
<dbReference type="GO" id="GO:0015937">
    <property type="term" value="P:coenzyme A biosynthetic process"/>
    <property type="evidence" value="ECO:0007669"/>
    <property type="project" value="UniProtKB-UniRule"/>
</dbReference>
<dbReference type="GO" id="GO:0015940">
    <property type="term" value="P:pantothenate biosynthetic process"/>
    <property type="evidence" value="ECO:0007669"/>
    <property type="project" value="InterPro"/>
</dbReference>
<dbReference type="CDD" id="cd06557">
    <property type="entry name" value="KPHMT-like"/>
    <property type="match status" value="1"/>
</dbReference>
<dbReference type="FunFam" id="3.20.20.60:FF:000052">
    <property type="entry name" value="3-methyl-2-oxobutanoate hydroxymethyltransferase"/>
    <property type="match status" value="1"/>
</dbReference>
<dbReference type="Gene3D" id="3.20.20.60">
    <property type="entry name" value="Phosphoenolpyruvate-binding domains"/>
    <property type="match status" value="1"/>
</dbReference>
<dbReference type="HAMAP" id="MF_00156">
    <property type="entry name" value="PanB"/>
    <property type="match status" value="1"/>
</dbReference>
<dbReference type="InterPro" id="IPR003700">
    <property type="entry name" value="Pantoate_hydroxy_MeTrfase"/>
</dbReference>
<dbReference type="InterPro" id="IPR015813">
    <property type="entry name" value="Pyrv/PenolPyrv_kinase-like_dom"/>
</dbReference>
<dbReference type="InterPro" id="IPR040442">
    <property type="entry name" value="Pyrv_kinase-like_dom_sf"/>
</dbReference>
<dbReference type="NCBIfam" id="TIGR00222">
    <property type="entry name" value="panB"/>
    <property type="match status" value="1"/>
</dbReference>
<dbReference type="NCBIfam" id="NF001452">
    <property type="entry name" value="PRK00311.1"/>
    <property type="match status" value="1"/>
</dbReference>
<dbReference type="PANTHER" id="PTHR20881">
    <property type="entry name" value="3-METHYL-2-OXOBUTANOATE HYDROXYMETHYLTRANSFERASE"/>
    <property type="match status" value="1"/>
</dbReference>
<dbReference type="PANTHER" id="PTHR20881:SF0">
    <property type="entry name" value="3-METHYL-2-OXOBUTANOATE HYDROXYMETHYLTRANSFERASE"/>
    <property type="match status" value="1"/>
</dbReference>
<dbReference type="Pfam" id="PF02548">
    <property type="entry name" value="Pantoate_transf"/>
    <property type="match status" value="1"/>
</dbReference>
<dbReference type="PIRSF" id="PIRSF000388">
    <property type="entry name" value="Pantoate_hydroxy_MeTrfase"/>
    <property type="match status" value="1"/>
</dbReference>
<dbReference type="SUPFAM" id="SSF51621">
    <property type="entry name" value="Phosphoenolpyruvate/pyruvate domain"/>
    <property type="match status" value="1"/>
</dbReference>
<sequence length="267" mass="29574">MKKVTIRDFIKKKSTKEKITMLTAYDYPTAKIISNTGLDSILVGDSLGMVVLGYPNTLNVTMRDMISHTRAVARANPPQLIVADMPFLSYEIDTKSAVKNAGLLVKAGSDAIKLEGGEEMKDTVKAIVKAGIPVMGHIGLTPQRFLRLGGFRTIGKTKQEEDQLIKDSLELEDAGVFSLVIENTYVDIAKRITEKLNIPTICIGAGPYCDGQVLVINDLLGLSEFTPYFAKSYVNLKEIISNAINQYIIDVKNNKFPEKQHYKERES</sequence>
<accession>C3NMB9</accession>
<comment type="function">
    <text evidence="1">Catalyzes the reversible reaction in which hydroxymethyl group from 5,10-methylenetetrahydrofolate is transferred onto alpha-ketoisovalerate to form ketopantoate.</text>
</comment>
<comment type="catalytic activity">
    <reaction evidence="1">
        <text>3-methyl-2-oxobutanoate + (6R)-5,10-methylene-5,6,7,8-tetrahydrofolate + H2O = 2-dehydropantoate + (6S)-5,6,7,8-tetrahydrofolate</text>
        <dbReference type="Rhea" id="RHEA:11824"/>
        <dbReference type="ChEBI" id="CHEBI:11561"/>
        <dbReference type="ChEBI" id="CHEBI:11851"/>
        <dbReference type="ChEBI" id="CHEBI:15377"/>
        <dbReference type="ChEBI" id="CHEBI:15636"/>
        <dbReference type="ChEBI" id="CHEBI:57453"/>
        <dbReference type="EC" id="2.1.2.11"/>
    </reaction>
</comment>
<comment type="cofactor">
    <cofactor evidence="1">
        <name>Mg(2+)</name>
        <dbReference type="ChEBI" id="CHEBI:18420"/>
    </cofactor>
    <text evidence="1">Binds 1 Mg(2+) ion per subunit.</text>
</comment>
<comment type="pathway">
    <text evidence="1">Cofactor biosynthesis; coenzyme A biosynthesis.</text>
</comment>
<comment type="subunit">
    <text evidence="1">Homodecamer; pentamer of dimers.</text>
</comment>
<comment type="subcellular location">
    <subcellularLocation>
        <location evidence="1">Cytoplasm</location>
    </subcellularLocation>
</comment>
<comment type="similarity">
    <text evidence="1">Belongs to the PanB family.</text>
</comment>
<name>PANB_SACI1</name>
<gene>
    <name evidence="1" type="primary">panB</name>
    <name type="ordered locus">YN1551_2797</name>
</gene>
<organism>
    <name type="scientific">Saccharolobus islandicus (strain Y.N.15.51 / Yellowstone #2)</name>
    <name type="common">Sulfolobus islandicus</name>
    <dbReference type="NCBI Taxonomy" id="419942"/>
    <lineage>
        <taxon>Archaea</taxon>
        <taxon>Thermoproteota</taxon>
        <taxon>Thermoprotei</taxon>
        <taxon>Sulfolobales</taxon>
        <taxon>Sulfolobaceae</taxon>
        <taxon>Saccharolobus</taxon>
    </lineage>
</organism>